<dbReference type="EMBL" id="Z22177">
    <property type="protein sequence ID" value="CAA80149.1"/>
    <property type="molecule type" value="Genomic_DNA"/>
</dbReference>
<dbReference type="PIR" id="S40769">
    <property type="entry name" value="S40769"/>
</dbReference>
<dbReference type="RefSeq" id="NP_499027.1">
    <property type="nucleotide sequence ID" value="NM_066626.5"/>
</dbReference>
<dbReference type="SMR" id="P34646"/>
<dbReference type="FunCoup" id="P34646">
    <property type="interactions" value="1561"/>
</dbReference>
<dbReference type="STRING" id="6239.ZK512.8.1"/>
<dbReference type="PaxDb" id="6239-ZK512.8"/>
<dbReference type="PeptideAtlas" id="P34646"/>
<dbReference type="EnsemblMetazoa" id="ZK512.8.1">
    <property type="protein sequence ID" value="ZK512.8.1"/>
    <property type="gene ID" value="WBGene00013987"/>
</dbReference>
<dbReference type="GeneID" id="176294"/>
<dbReference type="KEGG" id="cel:CELE_ZK512.8"/>
<dbReference type="UCSC" id="ZK512.8">
    <property type="organism name" value="c. elegans"/>
</dbReference>
<dbReference type="AGR" id="WB:WBGene00013987"/>
<dbReference type="CTD" id="176294"/>
<dbReference type="WormBase" id="ZK512.8">
    <property type="protein sequence ID" value="CE00414"/>
    <property type="gene ID" value="WBGene00013987"/>
</dbReference>
<dbReference type="eggNOG" id="ENOG502TFAF">
    <property type="taxonomic scope" value="Eukaryota"/>
</dbReference>
<dbReference type="GeneTree" id="ENSGT00970000196500"/>
<dbReference type="HOGENOM" id="CLU_1476463_0_0_1"/>
<dbReference type="InParanoid" id="P34646"/>
<dbReference type="OMA" id="KHPYNRR"/>
<dbReference type="OrthoDB" id="5786925at2759"/>
<dbReference type="PRO" id="PR:P34646"/>
<dbReference type="Proteomes" id="UP000001940">
    <property type="component" value="Chromosome III"/>
</dbReference>
<dbReference type="Bgee" id="WBGene00013987">
    <property type="expression patterns" value="Expressed in adult organism and 2 other cell types or tissues"/>
</dbReference>
<dbReference type="InterPro" id="IPR035332">
    <property type="entry name" value="DUF5386"/>
</dbReference>
<dbReference type="Pfam" id="PF17360">
    <property type="entry name" value="DUF5386"/>
    <property type="match status" value="1"/>
</dbReference>
<organism>
    <name type="scientific">Caenorhabditis elegans</name>
    <dbReference type="NCBI Taxonomy" id="6239"/>
    <lineage>
        <taxon>Eukaryota</taxon>
        <taxon>Metazoa</taxon>
        <taxon>Ecdysozoa</taxon>
        <taxon>Nematoda</taxon>
        <taxon>Chromadorea</taxon>
        <taxon>Rhabditida</taxon>
        <taxon>Rhabditina</taxon>
        <taxon>Rhabditomorpha</taxon>
        <taxon>Rhabditoidea</taxon>
        <taxon>Rhabditidae</taxon>
        <taxon>Peloderinae</taxon>
        <taxon>Caenorhabditis</taxon>
    </lineage>
</organism>
<evidence type="ECO:0000256" key="1">
    <source>
        <dbReference type="SAM" id="MobiDB-lite"/>
    </source>
</evidence>
<protein>
    <recommendedName>
        <fullName>Uncharacterized protein ZK512.8</fullName>
    </recommendedName>
</protein>
<name>YOQ8_CAEEL</name>
<proteinExistence type="predicted"/>
<accession>P34646</accession>
<feature type="chain" id="PRO_0000065521" description="Uncharacterized protein ZK512.8">
    <location>
        <begin position="1"/>
        <end position="171"/>
    </location>
</feature>
<feature type="region of interest" description="Disordered" evidence="1">
    <location>
        <begin position="1"/>
        <end position="50"/>
    </location>
</feature>
<feature type="region of interest" description="Disordered" evidence="1">
    <location>
        <begin position="71"/>
        <end position="91"/>
    </location>
</feature>
<keyword id="KW-1185">Reference proteome</keyword>
<sequence>MSHRNDSSRKHRKSRSIKNDQHYPTVSFDGAESVDIPADEGKSPVSTHLSLASNPTEFKFMDEIALLKRGRIDKDAPKHPYNRRGQQPMMKKEISVTSAHSNSSLPVRSPAIMTLMGGVPEAEKEYNVGKGGLLKISKMKEGGKRYEVSANERFTVFQQTAGQTCLFTFKA</sequence>
<gene>
    <name type="ORF">ZK512.8</name>
</gene>
<reference key="1">
    <citation type="journal article" date="1994" name="Nature">
        <title>2.2 Mb of contiguous nucleotide sequence from chromosome III of C. elegans.</title>
        <authorList>
            <person name="Wilson R."/>
            <person name="Ainscough R."/>
            <person name="Anderson K."/>
            <person name="Baynes C."/>
            <person name="Berks M."/>
            <person name="Bonfield J."/>
            <person name="Burton J."/>
            <person name="Connell M."/>
            <person name="Copsey T."/>
            <person name="Cooper J."/>
            <person name="Coulson A."/>
            <person name="Craxton M."/>
            <person name="Dear S."/>
            <person name="Du Z."/>
            <person name="Durbin R."/>
            <person name="Favello A."/>
            <person name="Fraser A."/>
            <person name="Fulton L."/>
            <person name="Gardner A."/>
            <person name="Green P."/>
            <person name="Hawkins T."/>
            <person name="Hillier L."/>
            <person name="Jier M."/>
            <person name="Johnston L."/>
            <person name="Jones M."/>
            <person name="Kershaw J."/>
            <person name="Kirsten J."/>
            <person name="Laisster N."/>
            <person name="Latreille P."/>
            <person name="Lightning J."/>
            <person name="Lloyd C."/>
            <person name="Mortimore B."/>
            <person name="O'Callaghan M."/>
            <person name="Parsons J."/>
            <person name="Percy C."/>
            <person name="Rifken L."/>
            <person name="Roopra A."/>
            <person name="Saunders D."/>
            <person name="Shownkeen R."/>
            <person name="Sims M."/>
            <person name="Smaldon N."/>
            <person name="Smith A."/>
            <person name="Smith M."/>
            <person name="Sonnhammer E."/>
            <person name="Staden R."/>
            <person name="Sulston J."/>
            <person name="Thierry-Mieg J."/>
            <person name="Thomas K."/>
            <person name="Vaudin M."/>
            <person name="Vaughan K."/>
            <person name="Waterston R."/>
            <person name="Watson A."/>
            <person name="Weinstock L."/>
            <person name="Wilkinson-Sproat J."/>
            <person name="Wohldman P."/>
        </authorList>
    </citation>
    <scope>NUCLEOTIDE SEQUENCE [LARGE SCALE GENOMIC DNA]</scope>
    <source>
        <strain>Bristol N2</strain>
    </source>
</reference>
<reference key="2">
    <citation type="journal article" date="1998" name="Science">
        <title>Genome sequence of the nematode C. elegans: a platform for investigating biology.</title>
        <authorList>
            <consortium name="The C. elegans sequencing consortium"/>
        </authorList>
    </citation>
    <scope>NUCLEOTIDE SEQUENCE [LARGE SCALE GENOMIC DNA]</scope>
    <source>
        <strain>Bristol N2</strain>
    </source>
</reference>